<name>LYRA_STAAE</name>
<gene>
    <name evidence="1" type="primary">lyrA</name>
    <name evidence="6" type="synonym">spdC</name>
    <name evidence="8" type="ordered locus">NWMN_2236</name>
</gene>
<dbReference type="EMBL" id="AP009351">
    <property type="protein sequence ID" value="BAF68508.1"/>
    <property type="molecule type" value="Genomic_DNA"/>
</dbReference>
<dbReference type="SMR" id="A0A0H3KA40"/>
<dbReference type="KEGG" id="sae:NWMN_2236"/>
<dbReference type="HOGENOM" id="CLU_046135_0_0_9"/>
<dbReference type="Proteomes" id="UP000006386">
    <property type="component" value="Chromosome"/>
</dbReference>
<dbReference type="GO" id="GO:0016020">
    <property type="term" value="C:membrane"/>
    <property type="evidence" value="ECO:0007669"/>
    <property type="project" value="UniProtKB-KW"/>
</dbReference>
<dbReference type="GO" id="GO:0004175">
    <property type="term" value="F:endopeptidase activity"/>
    <property type="evidence" value="ECO:0007669"/>
    <property type="project" value="UniProtKB-ARBA"/>
</dbReference>
<dbReference type="GO" id="GO:0080120">
    <property type="term" value="P:CAAX-box protein maturation"/>
    <property type="evidence" value="ECO:0007669"/>
    <property type="project" value="UniProtKB-ARBA"/>
</dbReference>
<dbReference type="InterPro" id="IPR003675">
    <property type="entry name" value="Rce1/LyrA-like_dom"/>
</dbReference>
<dbReference type="Pfam" id="PF02517">
    <property type="entry name" value="Rce1-like"/>
    <property type="match status" value="1"/>
</dbReference>
<reference evidence="9" key="1">
    <citation type="journal article" date="2008" name="J. Bacteriol.">
        <title>Genome sequence of Staphylococcus aureus strain Newman and comparative analysis of staphylococcal genomes: polymorphism and evolution of two major pathogenicity islands.</title>
        <authorList>
            <person name="Baba T."/>
            <person name="Bae T."/>
            <person name="Schneewind O."/>
            <person name="Takeuchi F."/>
            <person name="Hiramatsu K."/>
        </authorList>
    </citation>
    <scope>NUCLEOTIDE SEQUENCE [LARGE SCALE GENOMIC DNA]</scope>
    <source>
        <strain evidence="9">Newman</strain>
    </source>
</reference>
<reference evidence="7" key="2">
    <citation type="journal article" date="2010" name="Mol. Microbiol.">
        <title>ABI domain-containing proteins contribute to surface protein display and cell division in Staphylococcus aureus.</title>
        <authorList>
            <person name="Frankel M.B."/>
            <person name="Wojcik B.M."/>
            <person name="DeDent A.C."/>
            <person name="Missiakas D.M."/>
            <person name="Schneewind O."/>
        </authorList>
    </citation>
    <scope>FUNCTION</scope>
    <scope>SUBCELLULAR LOCATION</scope>
</reference>
<reference evidence="7" key="3">
    <citation type="journal article" date="2021" name="J. Bacteriol.">
        <title>Regulated cleavage of glycan strands by the murein hydrolase SagB in S. aureus involves a direct interaction with LyrA (SpdC).</title>
        <authorList>
            <person name="Willing S."/>
            <person name="Schneewind O."/>
            <person name="Missiakas D."/>
        </authorList>
    </citation>
    <scope>FUNCTION</scope>
    <scope>INTERACTION WITH SAGB</scope>
</reference>
<evidence type="ECO:0000250" key="1">
    <source>
        <dbReference type="UniProtKB" id="Q2FVT1"/>
    </source>
</evidence>
<evidence type="ECO:0000255" key="2"/>
<evidence type="ECO:0000269" key="3">
    <source>
    </source>
</evidence>
<evidence type="ECO:0000269" key="4">
    <source>
    </source>
</evidence>
<evidence type="ECO:0000303" key="5">
    <source>
    </source>
</evidence>
<evidence type="ECO:0000303" key="6">
    <source>
    </source>
</evidence>
<evidence type="ECO:0000305" key="7"/>
<evidence type="ECO:0000312" key="8">
    <source>
        <dbReference type="EMBL" id="BAF68508.1"/>
    </source>
</evidence>
<evidence type="ECO:0000312" key="9">
    <source>
        <dbReference type="Proteomes" id="UP000006386"/>
    </source>
</evidence>
<proteinExistence type="evidence at protein level"/>
<organism evidence="9">
    <name type="scientific">Staphylococcus aureus (strain Newman)</name>
    <dbReference type="NCBI Taxonomy" id="426430"/>
    <lineage>
        <taxon>Bacteria</taxon>
        <taxon>Bacillati</taxon>
        <taxon>Bacillota</taxon>
        <taxon>Bacilli</taxon>
        <taxon>Bacillales</taxon>
        <taxon>Staphylococcaceae</taxon>
        <taxon>Staphylococcus</taxon>
    </lineage>
</organism>
<sequence length="419" mass="46813">MKNNKISGFQWAMTIFVFFVITMALSIMLRDFQSIIGVKHFIFEVTDLAPLIAAIICILVFKYKKVQLAGLKFSISLKVIERLLLALILPLIILIIGMYSFNTFADSFILLQSTGLSVPITHILIGHILMAFVVEFGFRSYLQNIVETKMNTFFASIVVGLMYSVFSANTTYGTEFAAYNFLYTFSFSMILGELIRATKGRTIYIATTFHASMTFGLIFLFSEEIGDLFSIKVIAISTAIVAVGYIGLSLIIRGIAYLTTRRNLEELEPNNYLDHVNDDEETNHTEAEKSSSNIKDAEKTGVATASTVGVAKNDTENTVADEPSIHEGTEKTEPQHHIGNQTESNHDEDHDITSESVESAESVKQAPQSDDLTNDSNEDEIEQSLKEPVTYKEDRRSSVVIDAEKHIEKTEEQSSDKNK</sequence>
<protein>
    <recommendedName>
        <fullName>Lysostaphin resistance protein A</fullName>
    </recommendedName>
    <alternativeName>
        <fullName evidence="5">Abortive infectivity domain-containing protein</fullName>
    </alternativeName>
    <alternativeName>
        <fullName evidence="5">Surface protein display C</fullName>
    </alternativeName>
</protein>
<feature type="chain" id="PRO_0000462583" description="Lysostaphin resistance protein A">
    <location>
        <begin position="1"/>
        <end position="419"/>
    </location>
</feature>
<feature type="transmembrane region" description="Helical" evidence="2">
    <location>
        <begin position="9"/>
        <end position="29"/>
    </location>
</feature>
<feature type="transmembrane region" description="Helical" evidence="2">
    <location>
        <begin position="41"/>
        <end position="61"/>
    </location>
</feature>
<feature type="transmembrane region" description="Helical" evidence="2">
    <location>
        <begin position="84"/>
        <end position="104"/>
    </location>
</feature>
<feature type="transmembrane region" description="Helical" evidence="2">
    <location>
        <begin position="118"/>
        <end position="138"/>
    </location>
</feature>
<feature type="transmembrane region" description="Helical" evidence="2">
    <location>
        <begin position="153"/>
        <end position="173"/>
    </location>
</feature>
<feature type="transmembrane region" description="Helical" evidence="2">
    <location>
        <begin position="175"/>
        <end position="195"/>
    </location>
</feature>
<feature type="transmembrane region" description="Helical" evidence="2">
    <location>
        <begin position="202"/>
        <end position="222"/>
    </location>
</feature>
<feature type="transmembrane region" description="Helical" evidence="2">
    <location>
        <begin position="231"/>
        <end position="251"/>
    </location>
</feature>
<accession>A0A0H3KA40</accession>
<keyword id="KW-1003">Cell membrane</keyword>
<keyword id="KW-0134">Cell wall</keyword>
<keyword id="KW-0472">Membrane</keyword>
<keyword id="KW-0964">Secreted</keyword>
<keyword id="KW-0812">Transmembrane</keyword>
<keyword id="KW-1133">Transmembrane helix</keyword>
<comment type="function">
    <text evidence="1 3 4">Involved in bacterial cell envelope homeostasis (PubMed:33593946). Regulates peptidoglycan processing by N-acetylglucosaminidase SagB, perhaps acting as a scaffold protein (By similarity). Pleiotropic regulator of gene expression, probably acting via interactions with multiple two-component systems (By similarity). Plays a role in the abundant deposition of the immunoglobulin G-binding protein A (spa) at the cross-wall, a subcellular structure that initially arises from cytokinesis (PubMed:20923422).</text>
</comment>
<comment type="subunit">
    <text evidence="1 4">Interacts with N-acetylglucosaminidase SagB; interaction is direct and facilitates peptidoglycan processing (PubMed:33593946). Interacts (via N-terminal region including transmembrane domains) with sensor protein kinase WalK (via N-terminal region including transmembrane domains) (By similarity). Interacts (via N-terminal region including transmembrane domains) with sensor protein kinase SaeS (By similarity). Interacts with other histidine kinases, perhaps via their transmembrane domains (By similarity).</text>
</comment>
<comment type="subcellular location">
    <subcellularLocation>
        <location evidence="1">Cell membrane</location>
        <topology evidence="1">Multi-pass membrane protein</topology>
    </subcellularLocation>
    <subcellularLocation>
        <location evidence="3">Secreted</location>
        <location evidence="3">Cell wall</location>
    </subcellularLocation>
    <subcellularLocation>
        <location evidence="1">Cell septum</location>
    </subcellularLocation>
    <text evidence="3">Localization to the cross-wall is enriched in dividing cells.</text>
</comment>
<comment type="domain">
    <text evidence="1">C-terminal region not involved in glucosaminidase activity of the SagB-SpdC/LyrA complex.</text>
</comment>
<comment type="similarity">
    <text evidence="7">Belongs to the LyrA family.</text>
</comment>